<dbReference type="EMBL" id="AF166114">
    <property type="protein sequence ID" value="AAF43867.1"/>
    <property type="molecule type" value="Genomic_DNA"/>
</dbReference>
<dbReference type="RefSeq" id="NP_038427.1">
    <property type="nucleotide sequence ID" value="NC_002186.1"/>
</dbReference>
<dbReference type="SMR" id="Q9MUN3"/>
<dbReference type="GeneID" id="800950"/>
<dbReference type="GO" id="GO:0009535">
    <property type="term" value="C:chloroplast thylakoid membrane"/>
    <property type="evidence" value="ECO:0007669"/>
    <property type="project" value="UniProtKB-SubCell"/>
</dbReference>
<dbReference type="GO" id="GO:0009512">
    <property type="term" value="C:cytochrome b6f complex"/>
    <property type="evidence" value="ECO:0007669"/>
    <property type="project" value="InterPro"/>
</dbReference>
<dbReference type="GO" id="GO:0045158">
    <property type="term" value="F:electron transporter, transferring electrons within cytochrome b6/f complex of photosystem II activity"/>
    <property type="evidence" value="ECO:0007669"/>
    <property type="project" value="UniProtKB-UniRule"/>
</dbReference>
<dbReference type="GO" id="GO:0017004">
    <property type="term" value="P:cytochrome complex assembly"/>
    <property type="evidence" value="ECO:0007669"/>
    <property type="project" value="UniProtKB-UniRule"/>
</dbReference>
<dbReference type="GO" id="GO:0015979">
    <property type="term" value="P:photosynthesis"/>
    <property type="evidence" value="ECO:0007669"/>
    <property type="project" value="UniProtKB-KW"/>
</dbReference>
<dbReference type="HAMAP" id="MF_00432">
    <property type="entry name" value="Cytb6_f_PetG"/>
    <property type="match status" value="1"/>
</dbReference>
<dbReference type="InterPro" id="IPR003683">
    <property type="entry name" value="Cyt_6/f_cplx_su5"/>
</dbReference>
<dbReference type="InterPro" id="IPR036099">
    <property type="entry name" value="Cyt_6/f_cplx_su5_sf"/>
</dbReference>
<dbReference type="NCBIfam" id="NF001907">
    <property type="entry name" value="PRK00665.1"/>
    <property type="match status" value="1"/>
</dbReference>
<dbReference type="Pfam" id="PF02529">
    <property type="entry name" value="PetG"/>
    <property type="match status" value="1"/>
</dbReference>
<dbReference type="PIRSF" id="PIRSF000034">
    <property type="entry name" value="Cyt_b6-f_V"/>
    <property type="match status" value="1"/>
</dbReference>
<dbReference type="SUPFAM" id="SSF103446">
    <property type="entry name" value="PetG subunit of the cytochrome b6f complex"/>
    <property type="match status" value="1"/>
</dbReference>
<comment type="function">
    <text evidence="1">Component of the cytochrome b6-f complex, which mediates electron transfer between photosystem II (PSII) and photosystem I (PSI), cyclic electron flow around PSI, and state transitions. PetG is required for either the stability or assembly of the cytochrome b6-f complex.</text>
</comment>
<comment type="subunit">
    <text evidence="1">The 4 large subunits of the cytochrome b6-f complex are cytochrome b6, subunit IV (17 kDa polypeptide, PetD), cytochrome f and the Rieske protein, while the 4 small subunits are PetG, PetL, PetM and PetN. The complex functions as a dimer.</text>
</comment>
<comment type="subcellular location">
    <subcellularLocation>
        <location evidence="1">Plastid</location>
        <location evidence="1">Chloroplast thylakoid membrane</location>
        <topology evidence="1">Single-pass membrane protein</topology>
    </subcellularLocation>
</comment>
<comment type="similarity">
    <text evidence="1">Belongs to the PetG family.</text>
</comment>
<name>PETG_MESVI</name>
<proteinExistence type="inferred from homology"/>
<keyword id="KW-0150">Chloroplast</keyword>
<keyword id="KW-0249">Electron transport</keyword>
<keyword id="KW-0472">Membrane</keyword>
<keyword id="KW-0602">Photosynthesis</keyword>
<keyword id="KW-0934">Plastid</keyword>
<keyword id="KW-0793">Thylakoid</keyword>
<keyword id="KW-0812">Transmembrane</keyword>
<keyword id="KW-1133">Transmembrane helix</keyword>
<keyword id="KW-0813">Transport</keyword>
<accession>Q9MUN3</accession>
<protein>
    <recommendedName>
        <fullName evidence="1">Cytochrome b6-f complex subunit 5</fullName>
    </recommendedName>
    <alternativeName>
        <fullName evidence="1">Cytochrome b6-f complex subunit PetG</fullName>
    </alternativeName>
    <alternativeName>
        <fullName evidence="1">Cytochrome b6-f complex subunit V</fullName>
    </alternativeName>
</protein>
<gene>
    <name evidence="1" type="primary">petG</name>
</gene>
<reference key="1">
    <citation type="journal article" date="2000" name="Nature">
        <title>Ancestral chloroplast genome in Mesostigma viride reveals an early branch of green plant evolution.</title>
        <authorList>
            <person name="Lemieux C."/>
            <person name="Otis C."/>
            <person name="Turmel M."/>
        </authorList>
    </citation>
    <scope>NUCLEOTIDE SEQUENCE [LARGE SCALE GENOMIC DNA]</scope>
    <source>
        <strain>NIES-296 / KY-14 / CCMP 2046</strain>
    </source>
</reference>
<evidence type="ECO:0000255" key="1">
    <source>
        <dbReference type="HAMAP-Rule" id="MF_00432"/>
    </source>
</evidence>
<sequence>MVESLLSGIVLGMIPITLAGLFVTAYLQYRRGDQLKI</sequence>
<feature type="chain" id="PRO_0000216389" description="Cytochrome b6-f complex subunit 5">
    <location>
        <begin position="1"/>
        <end position="37"/>
    </location>
</feature>
<feature type="transmembrane region" description="Helical" evidence="1">
    <location>
        <begin position="5"/>
        <end position="25"/>
    </location>
</feature>
<geneLocation type="chloroplast"/>
<organism>
    <name type="scientific">Mesostigma viride</name>
    <name type="common">Green alga</name>
    <dbReference type="NCBI Taxonomy" id="41882"/>
    <lineage>
        <taxon>Eukaryota</taxon>
        <taxon>Viridiplantae</taxon>
        <taxon>Streptophyta</taxon>
        <taxon>Mesostigmatophyceae</taxon>
        <taxon>Mesostigmatales</taxon>
        <taxon>Mesostigmataceae</taxon>
        <taxon>Mesostigma</taxon>
    </lineage>
</organism>